<feature type="chain" id="PRO_1000004791" description="Phosphomethylpyrimidine synthase">
    <location>
        <begin position="1"/>
        <end position="456"/>
    </location>
</feature>
<feature type="binding site" evidence="1">
    <location>
        <position position="80"/>
    </location>
    <ligand>
        <name>substrate</name>
    </ligand>
</feature>
<feature type="binding site" evidence="1">
    <location>
        <position position="109"/>
    </location>
    <ligand>
        <name>substrate</name>
    </ligand>
</feature>
<feature type="binding site" evidence="1">
    <location>
        <position position="139"/>
    </location>
    <ligand>
        <name>substrate</name>
    </ligand>
</feature>
<feature type="binding site" evidence="1">
    <location>
        <position position="175"/>
    </location>
    <ligand>
        <name>substrate</name>
    </ligand>
</feature>
<feature type="binding site" evidence="1">
    <location>
        <begin position="195"/>
        <end position="197"/>
    </location>
    <ligand>
        <name>substrate</name>
    </ligand>
</feature>
<feature type="binding site" evidence="1">
    <location>
        <begin position="236"/>
        <end position="239"/>
    </location>
    <ligand>
        <name>substrate</name>
    </ligand>
</feature>
<feature type="binding site" evidence="1">
    <location>
        <position position="275"/>
    </location>
    <ligand>
        <name>substrate</name>
    </ligand>
</feature>
<feature type="binding site" evidence="1">
    <location>
        <position position="279"/>
    </location>
    <ligand>
        <name>Zn(2+)</name>
        <dbReference type="ChEBI" id="CHEBI:29105"/>
    </ligand>
</feature>
<feature type="binding site" evidence="1">
    <location>
        <position position="302"/>
    </location>
    <ligand>
        <name>substrate</name>
    </ligand>
</feature>
<feature type="binding site" evidence="1">
    <location>
        <position position="343"/>
    </location>
    <ligand>
        <name>Zn(2+)</name>
        <dbReference type="ChEBI" id="CHEBI:29105"/>
    </ligand>
</feature>
<feature type="binding site" evidence="1">
    <location>
        <position position="423"/>
    </location>
    <ligand>
        <name>[4Fe-4S] cluster</name>
        <dbReference type="ChEBI" id="CHEBI:49883"/>
        <note>4Fe-4S-S-AdoMet</note>
    </ligand>
</feature>
<feature type="binding site" evidence="1">
    <location>
        <position position="426"/>
    </location>
    <ligand>
        <name>[4Fe-4S] cluster</name>
        <dbReference type="ChEBI" id="CHEBI:49883"/>
        <note>4Fe-4S-S-AdoMet</note>
    </ligand>
</feature>
<feature type="binding site" evidence="1">
    <location>
        <position position="431"/>
    </location>
    <ligand>
        <name>[4Fe-4S] cluster</name>
        <dbReference type="ChEBI" id="CHEBI:49883"/>
        <note>4Fe-4S-S-AdoMet</note>
    </ligand>
</feature>
<protein>
    <recommendedName>
        <fullName evidence="1">Phosphomethylpyrimidine synthase</fullName>
        <ecNumber evidence="1">4.1.99.17</ecNumber>
    </recommendedName>
    <alternativeName>
        <fullName evidence="1">Hydroxymethylpyrimidine phosphate synthase</fullName>
        <shortName evidence="1">HMP-P synthase</shortName>
        <shortName evidence="1">HMP-phosphate synthase</shortName>
        <shortName evidence="1">HMPP synthase</shortName>
    </alternativeName>
    <alternativeName>
        <fullName evidence="1">Thiamine biosynthesis protein ThiC</fullName>
    </alternativeName>
</protein>
<keyword id="KW-0004">4Fe-4S</keyword>
<keyword id="KW-0408">Iron</keyword>
<keyword id="KW-0411">Iron-sulfur</keyword>
<keyword id="KW-0456">Lyase</keyword>
<keyword id="KW-0479">Metal-binding</keyword>
<keyword id="KW-0949">S-adenosyl-L-methionine</keyword>
<keyword id="KW-0784">Thiamine biosynthesis</keyword>
<keyword id="KW-0862">Zinc</keyword>
<evidence type="ECO:0000255" key="1">
    <source>
        <dbReference type="HAMAP-Rule" id="MF_00089"/>
    </source>
</evidence>
<name>THIC_PROMS</name>
<reference key="1">
    <citation type="journal article" date="2007" name="PLoS Genet.">
        <title>Patterns and implications of gene gain and loss in the evolution of Prochlorococcus.</title>
        <authorList>
            <person name="Kettler G.C."/>
            <person name="Martiny A.C."/>
            <person name="Huang K."/>
            <person name="Zucker J."/>
            <person name="Coleman M.L."/>
            <person name="Rodrigue S."/>
            <person name="Chen F."/>
            <person name="Lapidus A."/>
            <person name="Ferriera S."/>
            <person name="Johnson J."/>
            <person name="Steglich C."/>
            <person name="Church G.M."/>
            <person name="Richardson P."/>
            <person name="Chisholm S.W."/>
        </authorList>
    </citation>
    <scope>NUCLEOTIDE SEQUENCE [LARGE SCALE GENOMIC DNA]</scope>
    <source>
        <strain>AS9601</strain>
    </source>
</reference>
<comment type="function">
    <text evidence="1">Catalyzes the synthesis of the hydroxymethylpyrimidine phosphate (HMP-P) moiety of thiamine from aminoimidazole ribotide (AIR) in a radical S-adenosyl-L-methionine (SAM)-dependent reaction.</text>
</comment>
<comment type="catalytic activity">
    <reaction evidence="1">
        <text>5-amino-1-(5-phospho-beta-D-ribosyl)imidazole + S-adenosyl-L-methionine = 4-amino-2-methyl-5-(phosphooxymethyl)pyrimidine + CO + 5'-deoxyadenosine + formate + L-methionine + 3 H(+)</text>
        <dbReference type="Rhea" id="RHEA:24840"/>
        <dbReference type="ChEBI" id="CHEBI:15378"/>
        <dbReference type="ChEBI" id="CHEBI:15740"/>
        <dbReference type="ChEBI" id="CHEBI:17245"/>
        <dbReference type="ChEBI" id="CHEBI:17319"/>
        <dbReference type="ChEBI" id="CHEBI:57844"/>
        <dbReference type="ChEBI" id="CHEBI:58354"/>
        <dbReference type="ChEBI" id="CHEBI:59789"/>
        <dbReference type="ChEBI" id="CHEBI:137981"/>
        <dbReference type="EC" id="4.1.99.17"/>
    </reaction>
</comment>
<comment type="cofactor">
    <cofactor evidence="1">
        <name>[4Fe-4S] cluster</name>
        <dbReference type="ChEBI" id="CHEBI:49883"/>
    </cofactor>
    <text evidence="1">Binds 1 [4Fe-4S] cluster per subunit. The cluster is coordinated with 3 cysteines and an exchangeable S-adenosyl-L-methionine.</text>
</comment>
<comment type="pathway">
    <text evidence="1">Cofactor biosynthesis; thiamine diphosphate biosynthesis.</text>
</comment>
<comment type="similarity">
    <text evidence="1">Belongs to the ThiC family.</text>
</comment>
<organism>
    <name type="scientific">Prochlorococcus marinus (strain AS9601)</name>
    <dbReference type="NCBI Taxonomy" id="146891"/>
    <lineage>
        <taxon>Bacteria</taxon>
        <taxon>Bacillati</taxon>
        <taxon>Cyanobacteriota</taxon>
        <taxon>Cyanophyceae</taxon>
        <taxon>Synechococcales</taxon>
        <taxon>Prochlorococcaceae</taxon>
        <taxon>Prochlorococcus</taxon>
    </lineage>
</organism>
<accession>A2BTJ3</accession>
<proteinExistence type="inferred from homology"/>
<gene>
    <name evidence="1" type="primary">thiC</name>
    <name type="ordered locus">A9601_18211</name>
</gene>
<sequence length="456" mass="51031">MRSSWIKPRLGKDNVTQMNFARNGYITEEMDFVAKKENLPSSLIMEEVARGRLIIPANINHLNLEPMSIGIASRCKVNANIGASPNASDINEEVEKLKLAVKYGADTVMDLSTGGVNLDEVRQAIIQESPVPIGTVPVYQALESVHGSIDRLTEDDFLHIIEKHCQQGVDYQTIHAGLLIEHLPKVKGRITGIVSRGGGILAQWMLHHFKQNPLYTRFDDICEIFKKYDCTFSLGDSLRPGCLHDASDDAQLAELKTLGELTRRAWEHNVQVMVEGPGHVPMDQIEFNVRKQMEECSEAPFYVLGPLVTDISPGYDHISSAIGAAMAGWYGTSMLCYVTPKEHLGLPNAEDVREGLIAYKIAAHAADIARHRAGARDRDDELSHARYNFDWNKQFELSLDPERAKQYHDETLPEEIFKKAEFCSMCGPKHCPMNSKISDESLDQLKDKLEECNTSV</sequence>
<dbReference type="EC" id="4.1.99.17" evidence="1"/>
<dbReference type="EMBL" id="CP000551">
    <property type="protein sequence ID" value="ABM71104.1"/>
    <property type="molecule type" value="Genomic_DNA"/>
</dbReference>
<dbReference type="RefSeq" id="WP_011819223.1">
    <property type="nucleotide sequence ID" value="NC_008816.1"/>
</dbReference>
<dbReference type="SMR" id="A2BTJ3"/>
<dbReference type="STRING" id="146891.A9601_18211"/>
<dbReference type="KEGG" id="pmb:A9601_18211"/>
<dbReference type="eggNOG" id="COG0422">
    <property type="taxonomic scope" value="Bacteria"/>
</dbReference>
<dbReference type="HOGENOM" id="CLU_013181_2_1_3"/>
<dbReference type="OrthoDB" id="9805897at2"/>
<dbReference type="UniPathway" id="UPA00060"/>
<dbReference type="Proteomes" id="UP000002590">
    <property type="component" value="Chromosome"/>
</dbReference>
<dbReference type="GO" id="GO:0005829">
    <property type="term" value="C:cytosol"/>
    <property type="evidence" value="ECO:0007669"/>
    <property type="project" value="TreeGrafter"/>
</dbReference>
<dbReference type="GO" id="GO:0051539">
    <property type="term" value="F:4 iron, 4 sulfur cluster binding"/>
    <property type="evidence" value="ECO:0007669"/>
    <property type="project" value="UniProtKB-KW"/>
</dbReference>
<dbReference type="GO" id="GO:0016830">
    <property type="term" value="F:carbon-carbon lyase activity"/>
    <property type="evidence" value="ECO:0007669"/>
    <property type="project" value="InterPro"/>
</dbReference>
<dbReference type="GO" id="GO:0008270">
    <property type="term" value="F:zinc ion binding"/>
    <property type="evidence" value="ECO:0007669"/>
    <property type="project" value="UniProtKB-UniRule"/>
</dbReference>
<dbReference type="GO" id="GO:0009228">
    <property type="term" value="P:thiamine biosynthetic process"/>
    <property type="evidence" value="ECO:0007669"/>
    <property type="project" value="UniProtKB-KW"/>
</dbReference>
<dbReference type="GO" id="GO:0009229">
    <property type="term" value="P:thiamine diphosphate biosynthetic process"/>
    <property type="evidence" value="ECO:0007669"/>
    <property type="project" value="UniProtKB-UniRule"/>
</dbReference>
<dbReference type="FunFam" id="3.20.20.540:FF:000001">
    <property type="entry name" value="Phosphomethylpyrimidine synthase"/>
    <property type="match status" value="1"/>
</dbReference>
<dbReference type="Gene3D" id="6.10.250.620">
    <property type="match status" value="1"/>
</dbReference>
<dbReference type="Gene3D" id="3.20.20.540">
    <property type="entry name" value="Radical SAM ThiC family, central domain"/>
    <property type="match status" value="1"/>
</dbReference>
<dbReference type="HAMAP" id="MF_00089">
    <property type="entry name" value="ThiC"/>
    <property type="match status" value="1"/>
</dbReference>
<dbReference type="InterPro" id="IPR037509">
    <property type="entry name" value="ThiC"/>
</dbReference>
<dbReference type="InterPro" id="IPR038521">
    <property type="entry name" value="ThiC/Bza_core_dom"/>
</dbReference>
<dbReference type="InterPro" id="IPR002817">
    <property type="entry name" value="ThiC/BzaA/B"/>
</dbReference>
<dbReference type="NCBIfam" id="NF006763">
    <property type="entry name" value="PRK09284.1"/>
    <property type="match status" value="1"/>
</dbReference>
<dbReference type="NCBIfam" id="NF009895">
    <property type="entry name" value="PRK13352.1"/>
    <property type="match status" value="1"/>
</dbReference>
<dbReference type="NCBIfam" id="TIGR00190">
    <property type="entry name" value="thiC"/>
    <property type="match status" value="1"/>
</dbReference>
<dbReference type="PANTHER" id="PTHR30557:SF1">
    <property type="entry name" value="PHOSPHOMETHYLPYRIMIDINE SYNTHASE, CHLOROPLASTIC"/>
    <property type="match status" value="1"/>
</dbReference>
<dbReference type="PANTHER" id="PTHR30557">
    <property type="entry name" value="THIAMINE BIOSYNTHESIS PROTEIN THIC"/>
    <property type="match status" value="1"/>
</dbReference>
<dbReference type="Pfam" id="PF01964">
    <property type="entry name" value="ThiC_Rad_SAM"/>
    <property type="match status" value="1"/>
</dbReference>
<dbReference type="SFLD" id="SFLDF00407">
    <property type="entry name" value="phosphomethylpyrimidine_syntha"/>
    <property type="match status" value="1"/>
</dbReference>
<dbReference type="SFLD" id="SFLDG01114">
    <property type="entry name" value="phosphomethylpyrimidine_syntha"/>
    <property type="match status" value="1"/>
</dbReference>
<dbReference type="SFLD" id="SFLDS00113">
    <property type="entry name" value="Radical_SAM_Phosphomethylpyrim"/>
    <property type="match status" value="1"/>
</dbReference>